<organism>
    <name type="scientific">Bacillus cereus (strain AH820)</name>
    <dbReference type="NCBI Taxonomy" id="405535"/>
    <lineage>
        <taxon>Bacteria</taxon>
        <taxon>Bacillati</taxon>
        <taxon>Bacillota</taxon>
        <taxon>Bacilli</taxon>
        <taxon>Bacillales</taxon>
        <taxon>Bacillaceae</taxon>
        <taxon>Bacillus</taxon>
        <taxon>Bacillus cereus group</taxon>
    </lineage>
</organism>
<dbReference type="EC" id="3.6.5.n1" evidence="1"/>
<dbReference type="EMBL" id="CP001283">
    <property type="protein sequence ID" value="ACK89334.1"/>
    <property type="molecule type" value="Genomic_DNA"/>
</dbReference>
<dbReference type="RefSeq" id="WP_001030953.1">
    <property type="nucleotide sequence ID" value="NC_011773.1"/>
</dbReference>
<dbReference type="SMR" id="B7JNV1"/>
<dbReference type="KEGG" id="bcu:BCAH820_4341"/>
<dbReference type="HOGENOM" id="CLU_009995_3_3_9"/>
<dbReference type="Proteomes" id="UP000001363">
    <property type="component" value="Chromosome"/>
</dbReference>
<dbReference type="GO" id="GO:0005886">
    <property type="term" value="C:plasma membrane"/>
    <property type="evidence" value="ECO:0007669"/>
    <property type="project" value="UniProtKB-SubCell"/>
</dbReference>
<dbReference type="GO" id="GO:0005525">
    <property type="term" value="F:GTP binding"/>
    <property type="evidence" value="ECO:0007669"/>
    <property type="project" value="UniProtKB-UniRule"/>
</dbReference>
<dbReference type="GO" id="GO:0003924">
    <property type="term" value="F:GTPase activity"/>
    <property type="evidence" value="ECO:0007669"/>
    <property type="project" value="UniProtKB-UniRule"/>
</dbReference>
<dbReference type="GO" id="GO:0043022">
    <property type="term" value="F:ribosome binding"/>
    <property type="evidence" value="ECO:0007669"/>
    <property type="project" value="UniProtKB-UniRule"/>
</dbReference>
<dbReference type="GO" id="GO:0003746">
    <property type="term" value="F:translation elongation factor activity"/>
    <property type="evidence" value="ECO:0007669"/>
    <property type="project" value="UniProtKB-UniRule"/>
</dbReference>
<dbReference type="GO" id="GO:0045727">
    <property type="term" value="P:positive regulation of translation"/>
    <property type="evidence" value="ECO:0007669"/>
    <property type="project" value="UniProtKB-UniRule"/>
</dbReference>
<dbReference type="CDD" id="cd03699">
    <property type="entry name" value="EF4_II"/>
    <property type="match status" value="1"/>
</dbReference>
<dbReference type="CDD" id="cd16260">
    <property type="entry name" value="EF4_III"/>
    <property type="match status" value="1"/>
</dbReference>
<dbReference type="CDD" id="cd01890">
    <property type="entry name" value="LepA"/>
    <property type="match status" value="1"/>
</dbReference>
<dbReference type="CDD" id="cd03709">
    <property type="entry name" value="lepA_C"/>
    <property type="match status" value="1"/>
</dbReference>
<dbReference type="FunFam" id="3.40.50.300:FF:000078">
    <property type="entry name" value="Elongation factor 4"/>
    <property type="match status" value="1"/>
</dbReference>
<dbReference type="FunFam" id="2.40.30.10:FF:000015">
    <property type="entry name" value="Translation factor GUF1, mitochondrial"/>
    <property type="match status" value="1"/>
</dbReference>
<dbReference type="FunFam" id="3.30.70.240:FF:000007">
    <property type="entry name" value="Translation factor GUF1, mitochondrial"/>
    <property type="match status" value="1"/>
</dbReference>
<dbReference type="FunFam" id="3.30.70.2570:FF:000001">
    <property type="entry name" value="Translation factor GUF1, mitochondrial"/>
    <property type="match status" value="1"/>
</dbReference>
<dbReference type="FunFam" id="3.30.70.870:FF:000004">
    <property type="entry name" value="Translation factor GUF1, mitochondrial"/>
    <property type="match status" value="1"/>
</dbReference>
<dbReference type="Gene3D" id="3.30.70.240">
    <property type="match status" value="1"/>
</dbReference>
<dbReference type="Gene3D" id="3.30.70.2570">
    <property type="entry name" value="Elongation factor 4, C-terminal domain"/>
    <property type="match status" value="1"/>
</dbReference>
<dbReference type="Gene3D" id="3.30.70.870">
    <property type="entry name" value="Elongation Factor G (Translational Gtpase), domain 3"/>
    <property type="match status" value="1"/>
</dbReference>
<dbReference type="Gene3D" id="3.40.50.300">
    <property type="entry name" value="P-loop containing nucleotide triphosphate hydrolases"/>
    <property type="match status" value="1"/>
</dbReference>
<dbReference type="Gene3D" id="2.40.30.10">
    <property type="entry name" value="Translation factors"/>
    <property type="match status" value="1"/>
</dbReference>
<dbReference type="HAMAP" id="MF_00071">
    <property type="entry name" value="LepA"/>
    <property type="match status" value="1"/>
</dbReference>
<dbReference type="InterPro" id="IPR006297">
    <property type="entry name" value="EF-4"/>
</dbReference>
<dbReference type="InterPro" id="IPR035647">
    <property type="entry name" value="EFG_III/V"/>
</dbReference>
<dbReference type="InterPro" id="IPR000640">
    <property type="entry name" value="EFG_V-like"/>
</dbReference>
<dbReference type="InterPro" id="IPR004161">
    <property type="entry name" value="EFTu-like_2"/>
</dbReference>
<dbReference type="InterPro" id="IPR031157">
    <property type="entry name" value="G_TR_CS"/>
</dbReference>
<dbReference type="InterPro" id="IPR038363">
    <property type="entry name" value="LepA_C_sf"/>
</dbReference>
<dbReference type="InterPro" id="IPR013842">
    <property type="entry name" value="LepA_CTD"/>
</dbReference>
<dbReference type="InterPro" id="IPR035654">
    <property type="entry name" value="LepA_IV"/>
</dbReference>
<dbReference type="InterPro" id="IPR027417">
    <property type="entry name" value="P-loop_NTPase"/>
</dbReference>
<dbReference type="InterPro" id="IPR005225">
    <property type="entry name" value="Small_GTP-bd"/>
</dbReference>
<dbReference type="InterPro" id="IPR000795">
    <property type="entry name" value="T_Tr_GTP-bd_dom"/>
</dbReference>
<dbReference type="NCBIfam" id="TIGR01393">
    <property type="entry name" value="lepA"/>
    <property type="match status" value="1"/>
</dbReference>
<dbReference type="NCBIfam" id="TIGR00231">
    <property type="entry name" value="small_GTP"/>
    <property type="match status" value="1"/>
</dbReference>
<dbReference type="PANTHER" id="PTHR43512:SF4">
    <property type="entry name" value="TRANSLATION FACTOR GUF1 HOMOLOG, CHLOROPLASTIC"/>
    <property type="match status" value="1"/>
</dbReference>
<dbReference type="PANTHER" id="PTHR43512">
    <property type="entry name" value="TRANSLATION FACTOR GUF1-RELATED"/>
    <property type="match status" value="1"/>
</dbReference>
<dbReference type="Pfam" id="PF00679">
    <property type="entry name" value="EFG_C"/>
    <property type="match status" value="1"/>
</dbReference>
<dbReference type="Pfam" id="PF00009">
    <property type="entry name" value="GTP_EFTU"/>
    <property type="match status" value="1"/>
</dbReference>
<dbReference type="Pfam" id="PF03144">
    <property type="entry name" value="GTP_EFTU_D2"/>
    <property type="match status" value="1"/>
</dbReference>
<dbReference type="Pfam" id="PF06421">
    <property type="entry name" value="LepA_C"/>
    <property type="match status" value="1"/>
</dbReference>
<dbReference type="PRINTS" id="PR00315">
    <property type="entry name" value="ELONGATNFCT"/>
</dbReference>
<dbReference type="SMART" id="SM00838">
    <property type="entry name" value="EFG_C"/>
    <property type="match status" value="1"/>
</dbReference>
<dbReference type="SUPFAM" id="SSF54980">
    <property type="entry name" value="EF-G C-terminal domain-like"/>
    <property type="match status" value="2"/>
</dbReference>
<dbReference type="SUPFAM" id="SSF52540">
    <property type="entry name" value="P-loop containing nucleoside triphosphate hydrolases"/>
    <property type="match status" value="1"/>
</dbReference>
<dbReference type="PROSITE" id="PS00301">
    <property type="entry name" value="G_TR_1"/>
    <property type="match status" value="1"/>
</dbReference>
<dbReference type="PROSITE" id="PS51722">
    <property type="entry name" value="G_TR_2"/>
    <property type="match status" value="1"/>
</dbReference>
<sequence>MNKEERAKRQSKIRNFSIIAHIDHGKSTLADRILEKTNALTQREMKAQLLDSMDLERERGITIKLNAVQLNYKAKDGEEYILHLIDTPGHVDFTYEVSRSLAACEGAILVVDAAQGIEAQTLANVYLALDNNLEILPVINKIDLPSADPERVRQEVEDVIGLDASEAVLASAKAGIGIEEILEQIVEKVPAPTGDSEEPLQCMIFDSLYDPYRGVIAYIRVVNGTVKVGDKVRMMATGKEFEVTEVGVFTPKTTQRDELTVGDVGFLAASIKNVGDTRVGDTITHAKRPAAEPLAGYRKLNPMVFCGLYPIDSARYNDLRDALEKLELNDSALEFEPETSQALGFGFRCGFLGLLHMEIIQERIEREFKIDLITTAPSVIYKVFLTNGEDMIVDNPSNMPDPQTIDRVEEPFVKAAIMVPNDYVGAVMEICQGKRGTFIDMQYLDETRVTLTYEIPLSEIVYDFFDQLKSNTKGYASFDYELIGYKPSKLVKMDILLNSEQVDALSFIVHRDSAYDRGKVIVEKLKELIPRQQFEVPIQATIGNKVVARSTIKAMRKNVLAKCYGGDISRKRKLLDKQKEGKKRMKSVGSVEVPQEAFMAVLKMDDN</sequence>
<accession>B7JNV1</accession>
<comment type="function">
    <text evidence="1">Required for accurate and efficient protein synthesis under certain stress conditions. May act as a fidelity factor of the translation reaction, by catalyzing a one-codon backward translocation of tRNAs on improperly translocated ribosomes. Back-translocation proceeds from a post-translocation (POST) complex to a pre-translocation (PRE) complex, thus giving elongation factor G a second chance to translocate the tRNAs correctly. Binds to ribosomes in a GTP-dependent manner.</text>
</comment>
<comment type="catalytic activity">
    <reaction evidence="1">
        <text>GTP + H2O = GDP + phosphate + H(+)</text>
        <dbReference type="Rhea" id="RHEA:19669"/>
        <dbReference type="ChEBI" id="CHEBI:15377"/>
        <dbReference type="ChEBI" id="CHEBI:15378"/>
        <dbReference type="ChEBI" id="CHEBI:37565"/>
        <dbReference type="ChEBI" id="CHEBI:43474"/>
        <dbReference type="ChEBI" id="CHEBI:58189"/>
        <dbReference type="EC" id="3.6.5.n1"/>
    </reaction>
</comment>
<comment type="subcellular location">
    <subcellularLocation>
        <location evidence="1">Cell membrane</location>
        <topology evidence="1">Peripheral membrane protein</topology>
        <orientation evidence="1">Cytoplasmic side</orientation>
    </subcellularLocation>
</comment>
<comment type="similarity">
    <text evidence="1">Belongs to the TRAFAC class translation factor GTPase superfamily. Classic translation factor GTPase family. LepA subfamily.</text>
</comment>
<gene>
    <name evidence="1" type="primary">lepA</name>
    <name type="ordered locus">BCAH820_4341</name>
</gene>
<reference key="1">
    <citation type="submission" date="2008-10" db="EMBL/GenBank/DDBJ databases">
        <title>Genome sequence of Bacillus cereus AH820.</title>
        <authorList>
            <person name="Dodson R.J."/>
            <person name="Durkin A.S."/>
            <person name="Rosovitz M.J."/>
            <person name="Rasko D.A."/>
            <person name="Hoffmaster A."/>
            <person name="Ravel J."/>
            <person name="Sutton G."/>
        </authorList>
    </citation>
    <scope>NUCLEOTIDE SEQUENCE [LARGE SCALE GENOMIC DNA]</scope>
    <source>
        <strain>AH820</strain>
    </source>
</reference>
<feature type="chain" id="PRO_1000117014" description="Elongation factor 4">
    <location>
        <begin position="1"/>
        <end position="607"/>
    </location>
</feature>
<feature type="domain" description="tr-type G">
    <location>
        <begin position="11"/>
        <end position="193"/>
    </location>
</feature>
<feature type="binding site" evidence="1">
    <location>
        <begin position="23"/>
        <end position="28"/>
    </location>
    <ligand>
        <name>GTP</name>
        <dbReference type="ChEBI" id="CHEBI:37565"/>
    </ligand>
</feature>
<feature type="binding site" evidence="1">
    <location>
        <begin position="140"/>
        <end position="143"/>
    </location>
    <ligand>
        <name>GTP</name>
        <dbReference type="ChEBI" id="CHEBI:37565"/>
    </ligand>
</feature>
<protein>
    <recommendedName>
        <fullName evidence="1">Elongation factor 4</fullName>
        <shortName evidence="1">EF-4</shortName>
        <ecNumber evidence="1">3.6.5.n1</ecNumber>
    </recommendedName>
    <alternativeName>
        <fullName evidence="1">Ribosomal back-translocase LepA</fullName>
    </alternativeName>
</protein>
<evidence type="ECO:0000255" key="1">
    <source>
        <dbReference type="HAMAP-Rule" id="MF_00071"/>
    </source>
</evidence>
<proteinExistence type="inferred from homology"/>
<keyword id="KW-1003">Cell membrane</keyword>
<keyword id="KW-0342">GTP-binding</keyword>
<keyword id="KW-0378">Hydrolase</keyword>
<keyword id="KW-0472">Membrane</keyword>
<keyword id="KW-0547">Nucleotide-binding</keyword>
<keyword id="KW-0648">Protein biosynthesis</keyword>
<name>LEPA_BACC0</name>